<dbReference type="EMBL" id="BA000034">
    <property type="protein sequence ID" value="BAC64899.1"/>
    <property type="molecule type" value="Genomic_DNA"/>
</dbReference>
<dbReference type="RefSeq" id="WP_011055091.1">
    <property type="nucleotide sequence ID" value="NC_004606.1"/>
</dbReference>
<dbReference type="SMR" id="P0DC61"/>
<dbReference type="KEGG" id="sps:SPs1804"/>
<dbReference type="HOGENOM" id="CLU_002472_3_1_9"/>
<dbReference type="GO" id="GO:0005829">
    <property type="term" value="C:cytosol"/>
    <property type="evidence" value="ECO:0007669"/>
    <property type="project" value="TreeGrafter"/>
</dbReference>
<dbReference type="GO" id="GO:0005524">
    <property type="term" value="F:ATP binding"/>
    <property type="evidence" value="ECO:0007669"/>
    <property type="project" value="UniProtKB-UniRule"/>
</dbReference>
<dbReference type="GO" id="GO:0140664">
    <property type="term" value="F:ATP-dependent DNA damage sensor activity"/>
    <property type="evidence" value="ECO:0007669"/>
    <property type="project" value="InterPro"/>
</dbReference>
<dbReference type="GO" id="GO:0003684">
    <property type="term" value="F:damaged DNA binding"/>
    <property type="evidence" value="ECO:0007669"/>
    <property type="project" value="UniProtKB-UniRule"/>
</dbReference>
<dbReference type="GO" id="GO:0030983">
    <property type="term" value="F:mismatched DNA binding"/>
    <property type="evidence" value="ECO:0007669"/>
    <property type="project" value="InterPro"/>
</dbReference>
<dbReference type="GO" id="GO:0006298">
    <property type="term" value="P:mismatch repair"/>
    <property type="evidence" value="ECO:0007669"/>
    <property type="project" value="UniProtKB-UniRule"/>
</dbReference>
<dbReference type="CDD" id="cd03284">
    <property type="entry name" value="ABC_MutS1"/>
    <property type="match status" value="1"/>
</dbReference>
<dbReference type="FunFam" id="1.10.1420.10:FF:000001">
    <property type="entry name" value="DNA mismatch repair protein MutS"/>
    <property type="match status" value="1"/>
</dbReference>
<dbReference type="FunFam" id="3.40.1170.10:FF:000001">
    <property type="entry name" value="DNA mismatch repair protein MutS"/>
    <property type="match status" value="1"/>
</dbReference>
<dbReference type="FunFam" id="3.40.50.300:FF:000896">
    <property type="entry name" value="DNA mismatch repair protein MutS"/>
    <property type="match status" value="1"/>
</dbReference>
<dbReference type="Gene3D" id="1.10.1420.10">
    <property type="match status" value="2"/>
</dbReference>
<dbReference type="Gene3D" id="3.40.1170.10">
    <property type="entry name" value="DNA repair protein MutS, domain I"/>
    <property type="match status" value="1"/>
</dbReference>
<dbReference type="Gene3D" id="3.30.420.110">
    <property type="entry name" value="MutS, connector domain"/>
    <property type="match status" value="1"/>
</dbReference>
<dbReference type="Gene3D" id="3.40.50.300">
    <property type="entry name" value="P-loop containing nucleotide triphosphate hydrolases"/>
    <property type="match status" value="1"/>
</dbReference>
<dbReference type="HAMAP" id="MF_00096">
    <property type="entry name" value="MutS"/>
    <property type="match status" value="1"/>
</dbReference>
<dbReference type="InterPro" id="IPR005748">
    <property type="entry name" value="DNA_mismatch_repair_MutS"/>
</dbReference>
<dbReference type="InterPro" id="IPR007695">
    <property type="entry name" value="DNA_mismatch_repair_MutS-lik_N"/>
</dbReference>
<dbReference type="InterPro" id="IPR017261">
    <property type="entry name" value="DNA_mismatch_repair_MutS/MSH"/>
</dbReference>
<dbReference type="InterPro" id="IPR000432">
    <property type="entry name" value="DNA_mismatch_repair_MutS_C"/>
</dbReference>
<dbReference type="InterPro" id="IPR007861">
    <property type="entry name" value="DNA_mismatch_repair_MutS_clamp"/>
</dbReference>
<dbReference type="InterPro" id="IPR007696">
    <property type="entry name" value="DNA_mismatch_repair_MutS_core"/>
</dbReference>
<dbReference type="InterPro" id="IPR016151">
    <property type="entry name" value="DNA_mismatch_repair_MutS_N"/>
</dbReference>
<dbReference type="InterPro" id="IPR036187">
    <property type="entry name" value="DNA_mismatch_repair_MutS_sf"/>
</dbReference>
<dbReference type="InterPro" id="IPR007860">
    <property type="entry name" value="DNA_mmatch_repair_MutS_con_dom"/>
</dbReference>
<dbReference type="InterPro" id="IPR045076">
    <property type="entry name" value="MutS"/>
</dbReference>
<dbReference type="InterPro" id="IPR036678">
    <property type="entry name" value="MutS_con_dom_sf"/>
</dbReference>
<dbReference type="InterPro" id="IPR027417">
    <property type="entry name" value="P-loop_NTPase"/>
</dbReference>
<dbReference type="NCBIfam" id="TIGR01070">
    <property type="entry name" value="mutS1"/>
    <property type="match status" value="1"/>
</dbReference>
<dbReference type="NCBIfam" id="NF003810">
    <property type="entry name" value="PRK05399.1"/>
    <property type="match status" value="1"/>
</dbReference>
<dbReference type="PANTHER" id="PTHR11361:SF34">
    <property type="entry name" value="DNA MISMATCH REPAIR PROTEIN MSH1, MITOCHONDRIAL"/>
    <property type="match status" value="1"/>
</dbReference>
<dbReference type="PANTHER" id="PTHR11361">
    <property type="entry name" value="DNA MISMATCH REPAIR PROTEIN MUTS FAMILY MEMBER"/>
    <property type="match status" value="1"/>
</dbReference>
<dbReference type="Pfam" id="PF01624">
    <property type="entry name" value="MutS_I"/>
    <property type="match status" value="1"/>
</dbReference>
<dbReference type="Pfam" id="PF05188">
    <property type="entry name" value="MutS_II"/>
    <property type="match status" value="1"/>
</dbReference>
<dbReference type="Pfam" id="PF05192">
    <property type="entry name" value="MutS_III"/>
    <property type="match status" value="1"/>
</dbReference>
<dbReference type="Pfam" id="PF05190">
    <property type="entry name" value="MutS_IV"/>
    <property type="match status" value="1"/>
</dbReference>
<dbReference type="Pfam" id="PF00488">
    <property type="entry name" value="MutS_V"/>
    <property type="match status" value="1"/>
</dbReference>
<dbReference type="PIRSF" id="PIRSF037677">
    <property type="entry name" value="DNA_mis_repair_Msh6"/>
    <property type="match status" value="1"/>
</dbReference>
<dbReference type="SMART" id="SM00534">
    <property type="entry name" value="MUTSac"/>
    <property type="match status" value="1"/>
</dbReference>
<dbReference type="SMART" id="SM00533">
    <property type="entry name" value="MUTSd"/>
    <property type="match status" value="1"/>
</dbReference>
<dbReference type="SUPFAM" id="SSF55271">
    <property type="entry name" value="DNA repair protein MutS, domain I"/>
    <property type="match status" value="1"/>
</dbReference>
<dbReference type="SUPFAM" id="SSF53150">
    <property type="entry name" value="DNA repair protein MutS, domain II"/>
    <property type="match status" value="1"/>
</dbReference>
<dbReference type="SUPFAM" id="SSF48334">
    <property type="entry name" value="DNA repair protein MutS, domain III"/>
    <property type="match status" value="1"/>
</dbReference>
<dbReference type="SUPFAM" id="SSF52540">
    <property type="entry name" value="P-loop containing nucleoside triphosphate hydrolases"/>
    <property type="match status" value="1"/>
</dbReference>
<dbReference type="PROSITE" id="PS00486">
    <property type="entry name" value="DNA_MISMATCH_REPAIR_2"/>
    <property type="match status" value="1"/>
</dbReference>
<feature type="chain" id="PRO_0000411418" description="DNA mismatch repair protein MutS">
    <location>
        <begin position="1"/>
        <end position="851"/>
    </location>
</feature>
<feature type="binding site" evidence="1">
    <location>
        <begin position="602"/>
        <end position="609"/>
    </location>
    <ligand>
        <name>ATP</name>
        <dbReference type="ChEBI" id="CHEBI:30616"/>
    </ligand>
</feature>
<reference key="1">
    <citation type="journal article" date="2003" name="Genome Res.">
        <title>Genome sequence of an M3 strain of Streptococcus pyogenes reveals a large-scale genomic rearrangement in invasive strains and new insights into phage evolution.</title>
        <authorList>
            <person name="Nakagawa I."/>
            <person name="Kurokawa K."/>
            <person name="Yamashita A."/>
            <person name="Nakata M."/>
            <person name="Tomiyasu Y."/>
            <person name="Okahashi N."/>
            <person name="Kawabata S."/>
            <person name="Yamazaki K."/>
            <person name="Shiba T."/>
            <person name="Yasunaga T."/>
            <person name="Hayashi H."/>
            <person name="Hattori M."/>
            <person name="Hamada S."/>
        </authorList>
    </citation>
    <scope>NUCLEOTIDE SEQUENCE [LARGE SCALE GENOMIC DNA]</scope>
    <source>
        <strain>SSI-1</strain>
    </source>
</reference>
<sequence length="851" mass="95487">MAKTNISPGMQQYLDIKKDYPDAFLLFRMGDFYELFYEDAVKAAQLLEIGLTSRNKNAENPIPMAGVPHHSAQQYIDVLIELGYKVAVAEQMEDPKQAVGVVKREVVQVITPGTVVDSAKPDSANNFLVAVDFDGCRYGLAYMDVSTGEFCVTDLADFTSVRSEIQNLKAKEVLLGFDLSEEEQTILVKQMNLLLSYEETVYEDKSLIDGQLTTVELTAAGKLLQYVHKTQMRELSHLQALVHYEIKDYLQMSYATKSSLDLVENARTNKKHGSLYWLLDETKTAMGMRLLRSWIDRPLVSKEAILERQEIIQVFLNAFIERTDLSNSLKGVYDIERLSSRVSFGKANPKDLLQLGHTLAQVPYIKAILESFDSPCVDKLVNDIDSLPELEYLIRTAIDPDAPATISEGSIIRNGFDERLDHYRKVMREGTGWIADIEAKERQASGINNLKIDYNKKDGYYFHVTNSNLSLVPEHFFRKATLKNSERYGTAELAKIEGQMLEAREESSSLEYDIFMCIRAQVETYINRLQKLAKILATVDVLQSLAVVAETNHYIRPQFNDNHVITIQEGRHAVVEKVMGVQEYIPNSISFDQQTSIQLITGPNMSGKSTYMRQLALTVIMAQMGSFVAADHVDLPLFDAIFTRIGAADDLISGQSTFMVEMMEANQAIKRASDNSLILFDELGRGTATYDGMALAQAIIEYIHDRVGAKTIFATHYHELTDLSTKLTSLVNVHVATLEKDGDVTFLHKIAEGPADKSYGIHVAKIAGLPKSLLKRADEVLTRLETQSRSTEIISVPSQVESSSAVRQGQLSLFGDEEKTHEIRQALEAIDVMNMTPLQAMTTLYELKKLL</sequence>
<name>MUTS_STRPQ</name>
<evidence type="ECO:0000255" key="1">
    <source>
        <dbReference type="HAMAP-Rule" id="MF_00096"/>
    </source>
</evidence>
<accession>P0DC61</accession>
<accession>Q8K5J5</accession>
<keyword id="KW-0067">ATP-binding</keyword>
<keyword id="KW-0227">DNA damage</keyword>
<keyword id="KW-0234">DNA repair</keyword>
<keyword id="KW-0238">DNA-binding</keyword>
<keyword id="KW-0547">Nucleotide-binding</keyword>
<protein>
    <recommendedName>
        <fullName evidence="1">DNA mismatch repair protein MutS</fullName>
    </recommendedName>
</protein>
<comment type="function">
    <text evidence="1">This protein is involved in the repair of mismatches in DNA. It is possible that it carries out the mismatch recognition step. This protein has a weak ATPase activity.</text>
</comment>
<comment type="similarity">
    <text evidence="1">Belongs to the DNA mismatch repair MutS family.</text>
</comment>
<gene>
    <name evidence="1" type="primary">mutS</name>
    <name type="ordered locus">SPs1804</name>
</gene>
<proteinExistence type="inferred from homology"/>
<organism>
    <name type="scientific">Streptococcus pyogenes serotype M3 (strain SSI-1)</name>
    <dbReference type="NCBI Taxonomy" id="193567"/>
    <lineage>
        <taxon>Bacteria</taxon>
        <taxon>Bacillati</taxon>
        <taxon>Bacillota</taxon>
        <taxon>Bacilli</taxon>
        <taxon>Lactobacillales</taxon>
        <taxon>Streptococcaceae</taxon>
        <taxon>Streptococcus</taxon>
    </lineage>
</organism>